<dbReference type="EMBL" id="BT020672">
    <property type="protein sequence ID" value="AAX08689.1"/>
    <property type="molecule type" value="mRNA"/>
</dbReference>
<dbReference type="RefSeq" id="NP_001026930.1">
    <property type="nucleotide sequence ID" value="NM_001031760.1"/>
</dbReference>
<dbReference type="SMR" id="Q5EA97"/>
<dbReference type="FunCoup" id="Q5EA97">
    <property type="interactions" value="35"/>
</dbReference>
<dbReference type="STRING" id="9913.ENSBTAP00000065345"/>
<dbReference type="GlyCosmos" id="Q5EA97">
    <property type="glycosylation" value="3 sites, No reported glycans"/>
</dbReference>
<dbReference type="GlyGen" id="Q5EA97">
    <property type="glycosylation" value="3 sites"/>
</dbReference>
<dbReference type="PaxDb" id="9913-ENSBTAP00000010065"/>
<dbReference type="GeneID" id="523418"/>
<dbReference type="KEGG" id="bta:523418"/>
<dbReference type="CTD" id="151258"/>
<dbReference type="eggNOG" id="KOG1305">
    <property type="taxonomic scope" value="Eukaryota"/>
</dbReference>
<dbReference type="InParanoid" id="Q5EA97"/>
<dbReference type="OrthoDB" id="28208at2759"/>
<dbReference type="Proteomes" id="UP000009136">
    <property type="component" value="Unplaced"/>
</dbReference>
<dbReference type="GO" id="GO:0016020">
    <property type="term" value="C:membrane"/>
    <property type="evidence" value="ECO:0000318"/>
    <property type="project" value="GO_Central"/>
</dbReference>
<dbReference type="GO" id="GO:0015179">
    <property type="term" value="F:L-amino acid transmembrane transporter activity"/>
    <property type="evidence" value="ECO:0000318"/>
    <property type="project" value="GO_Central"/>
</dbReference>
<dbReference type="GO" id="GO:0003333">
    <property type="term" value="P:amino acid transmembrane transport"/>
    <property type="evidence" value="ECO:0000318"/>
    <property type="project" value="GO_Central"/>
</dbReference>
<dbReference type="GO" id="GO:0006814">
    <property type="term" value="P:sodium ion transport"/>
    <property type="evidence" value="ECO:0007669"/>
    <property type="project" value="UniProtKB-KW"/>
</dbReference>
<dbReference type="InterPro" id="IPR013057">
    <property type="entry name" value="AA_transpt_TM"/>
</dbReference>
<dbReference type="PANTHER" id="PTHR22950">
    <property type="entry name" value="AMINO ACID TRANSPORTER"/>
    <property type="match status" value="1"/>
</dbReference>
<dbReference type="PANTHER" id="PTHR22950:SF458">
    <property type="entry name" value="SODIUM-COUPLED NEUTRAL AMINO ACID TRANSPORTER 11-RELATED"/>
    <property type="match status" value="1"/>
</dbReference>
<dbReference type="Pfam" id="PF01490">
    <property type="entry name" value="Aa_trans"/>
    <property type="match status" value="1"/>
</dbReference>
<organism>
    <name type="scientific">Bos taurus</name>
    <name type="common">Bovine</name>
    <dbReference type="NCBI Taxonomy" id="9913"/>
    <lineage>
        <taxon>Eukaryota</taxon>
        <taxon>Metazoa</taxon>
        <taxon>Chordata</taxon>
        <taxon>Craniata</taxon>
        <taxon>Vertebrata</taxon>
        <taxon>Euteleostomi</taxon>
        <taxon>Mammalia</taxon>
        <taxon>Eutheria</taxon>
        <taxon>Laurasiatheria</taxon>
        <taxon>Artiodactyla</taxon>
        <taxon>Ruminantia</taxon>
        <taxon>Pecora</taxon>
        <taxon>Bovidae</taxon>
        <taxon>Bovinae</taxon>
        <taxon>Bos</taxon>
    </lineage>
</organism>
<name>S38AB_BOVIN</name>
<gene>
    <name type="primary">SLC38A11</name>
</gene>
<protein>
    <recommendedName>
        <fullName>Putative sodium-coupled neutral amino acid transporter 11</fullName>
    </recommendedName>
    <alternativeName>
        <fullName>Solute carrier family 38 member 11</fullName>
    </alternativeName>
</protein>
<accession>Q5EA97</accession>
<sequence length="463" mass="50745">MGYPGQRPVIPPQSHRDDRETLVSEHKHKGKTCRQSAAVFNVVNSIIGSGIIGLPYSMKQAGFPLGILLLFWVSYVTDFSLILLIKGAALSGTDTYQSLVNRTFGFPGYLLLSVLQFLYPFIAMISYNIITGDTLSKVFQRIPGVDPENLLIGRHLIIVLSTVVFTLPLSLYRDIAKLGKISLISTVLTTLILGIVVARGVSLGPHIPKTEDAWIFAKPNAVQAVGVMSFAFICHHNCFLVYGSLEEPTVAKWSHIIHVSTLISVFISILFATCGYLTFTGYTQGDLFENYCRNDDLVTFGRFCYGVTVILTYPIECFVTREVIANVFFGGNLSSVCHIIVTVVIITVATLVSLLIDCLGIVLELNGVLCAAPLIFIIPSACYLKLSEEPRTHSDKIMSCVMLPIGAVVMAVGFVMAVTSPQDCSHGQEMFYCSPDNFSLTNISISHFQLTTQLSILNVSIFQ</sequence>
<evidence type="ECO:0000250" key="1"/>
<evidence type="ECO:0000255" key="2"/>
<evidence type="ECO:0000256" key="3">
    <source>
        <dbReference type="SAM" id="MobiDB-lite"/>
    </source>
</evidence>
<evidence type="ECO:0000305" key="4"/>
<feature type="chain" id="PRO_0000326058" description="Putative sodium-coupled neutral amino acid transporter 11">
    <location>
        <begin position="1"/>
        <end position="463"/>
    </location>
</feature>
<feature type="transmembrane region" description="Helical" evidence="2">
    <location>
        <begin position="38"/>
        <end position="58"/>
    </location>
</feature>
<feature type="transmembrane region" description="Helical" evidence="2">
    <location>
        <begin position="65"/>
        <end position="85"/>
    </location>
</feature>
<feature type="transmembrane region" description="Helical" evidence="2">
    <location>
        <begin position="105"/>
        <end position="125"/>
    </location>
</feature>
<feature type="transmembrane region" description="Helical" evidence="2">
    <location>
        <begin position="150"/>
        <end position="170"/>
    </location>
</feature>
<feature type="transmembrane region" description="Helical" evidence="2">
    <location>
        <begin position="178"/>
        <end position="198"/>
    </location>
</feature>
<feature type="transmembrane region" description="Helical" evidence="2">
    <location>
        <begin position="225"/>
        <end position="245"/>
    </location>
</feature>
<feature type="transmembrane region" description="Helical" evidence="2">
    <location>
        <begin position="256"/>
        <end position="276"/>
    </location>
</feature>
<feature type="transmembrane region" description="Helical" evidence="2">
    <location>
        <begin position="298"/>
        <end position="320"/>
    </location>
</feature>
<feature type="transmembrane region" description="Helical" evidence="2">
    <location>
        <begin position="336"/>
        <end position="356"/>
    </location>
</feature>
<feature type="transmembrane region" description="Helical" evidence="2">
    <location>
        <begin position="358"/>
        <end position="378"/>
    </location>
</feature>
<feature type="transmembrane region" description="Helical" evidence="2">
    <location>
        <begin position="397"/>
        <end position="417"/>
    </location>
</feature>
<feature type="region of interest" description="Disordered" evidence="3">
    <location>
        <begin position="1"/>
        <end position="27"/>
    </location>
</feature>
<feature type="compositionally biased region" description="Basic and acidic residues" evidence="3">
    <location>
        <begin position="14"/>
        <end position="25"/>
    </location>
</feature>
<feature type="glycosylation site" description="N-linked (GlcNAc...) asparagine" evidence="2">
    <location>
        <position position="437"/>
    </location>
</feature>
<feature type="glycosylation site" description="N-linked (GlcNAc...) asparagine" evidence="2">
    <location>
        <position position="442"/>
    </location>
</feature>
<feature type="glycosylation site" description="N-linked (GlcNAc...) asparagine" evidence="2">
    <location>
        <position position="458"/>
    </location>
</feature>
<proteinExistence type="evidence at transcript level"/>
<keyword id="KW-0029">Amino-acid transport</keyword>
<keyword id="KW-0325">Glycoprotein</keyword>
<keyword id="KW-0406">Ion transport</keyword>
<keyword id="KW-0472">Membrane</keyword>
<keyword id="KW-1185">Reference proteome</keyword>
<keyword id="KW-0915">Sodium</keyword>
<keyword id="KW-0739">Sodium transport</keyword>
<keyword id="KW-0812">Transmembrane</keyword>
<keyword id="KW-1133">Transmembrane helix</keyword>
<keyword id="KW-0813">Transport</keyword>
<reference key="1">
    <citation type="journal article" date="2005" name="BMC Genomics">
        <title>Characterization of 954 bovine full-CDS cDNA sequences.</title>
        <authorList>
            <person name="Harhay G.P."/>
            <person name="Sonstegard T.S."/>
            <person name="Keele J.W."/>
            <person name="Heaton M.P."/>
            <person name="Clawson M.L."/>
            <person name="Snelling W.M."/>
            <person name="Wiedmann R.T."/>
            <person name="Van Tassell C.P."/>
            <person name="Smith T.P.L."/>
        </authorList>
    </citation>
    <scope>NUCLEOTIDE SEQUENCE [LARGE SCALE MRNA]</scope>
</reference>
<comment type="function">
    <text evidence="1">Putative sodium-dependent amino acid/proton antiporter.</text>
</comment>
<comment type="subcellular location">
    <subcellularLocation>
        <location evidence="4">Membrane</location>
        <topology evidence="4">Multi-pass membrane protein</topology>
    </subcellularLocation>
</comment>
<comment type="similarity">
    <text evidence="4">Belongs to the amino acid/polyamine transporter 2 family.</text>
</comment>